<organism>
    <name type="scientific">Mus musculus</name>
    <name type="common">Mouse</name>
    <dbReference type="NCBI Taxonomy" id="10090"/>
    <lineage>
        <taxon>Eukaryota</taxon>
        <taxon>Metazoa</taxon>
        <taxon>Chordata</taxon>
        <taxon>Craniata</taxon>
        <taxon>Vertebrata</taxon>
        <taxon>Euteleostomi</taxon>
        <taxon>Mammalia</taxon>
        <taxon>Eutheria</taxon>
        <taxon>Euarchontoglires</taxon>
        <taxon>Glires</taxon>
        <taxon>Rodentia</taxon>
        <taxon>Myomorpha</taxon>
        <taxon>Muroidea</taxon>
        <taxon>Muridae</taxon>
        <taxon>Murinae</taxon>
        <taxon>Mus</taxon>
        <taxon>Mus</taxon>
    </lineage>
</organism>
<name>GPR61_MOUSE</name>
<comment type="function">
    <text evidence="1 5">Orphan G-protein coupled receptor. Constitutively activates the G(s)-alpha/cAMP signaling pathway (By similarity). Shows a reciprocal regulatory interaction with the melatonin receptor MTNR1B most likely through receptor heteromerization (By similarity). May be involved in the regulation of food intake and body weight (PubMed:21971119).</text>
</comment>
<comment type="subunit">
    <text evidence="1">Forms heterodimer with MTNR1B. Interacts with ARRB1 and ARRB2 in a spontaneous and agonist-independent manner; leading to the internalization of GPR61 in the endosomal compartment (By similarity).</text>
</comment>
<comment type="subcellular location">
    <subcellularLocation>
        <location evidence="1">Cell membrane</location>
        <topology evidence="2">Multi-pass membrane protein</topology>
    </subcellularLocation>
    <subcellularLocation>
        <location evidence="1">Endosome membrane</location>
        <topology evidence="2">Multi-pass membrane protein</topology>
    </subcellularLocation>
    <text evidence="1">Colocalizes with ARRB2/beta-arrestin-2 in the endosome (By similarity).</text>
</comment>
<comment type="tissue specificity">
    <text evidence="5 6">Predominantly expressed in the brain and testes, with relatively lower expression observed in the eye, adrenal gland and pituitary gland.</text>
</comment>
<comment type="disruption phenotype">
    <text evidence="5">Deficient mice exhibit obesity associated with hyperphagia.</text>
</comment>
<comment type="similarity">
    <text evidence="3">Belongs to the G-protein coupled receptor 1 family.</text>
</comment>
<keyword id="KW-1003">Cell membrane</keyword>
<keyword id="KW-0967">Endosome</keyword>
<keyword id="KW-0297">G-protein coupled receptor</keyword>
<keyword id="KW-0325">Glycoprotein</keyword>
<keyword id="KW-0472">Membrane</keyword>
<keyword id="KW-0675">Receptor</keyword>
<keyword id="KW-1185">Reference proteome</keyword>
<keyword id="KW-0807">Transducer</keyword>
<keyword id="KW-0812">Transmembrane</keyword>
<keyword id="KW-1133">Transmembrane helix</keyword>
<evidence type="ECO:0000250" key="1">
    <source>
        <dbReference type="UniProtKB" id="Q9BZJ8"/>
    </source>
</evidence>
<evidence type="ECO:0000255" key="2"/>
<evidence type="ECO:0000255" key="3">
    <source>
        <dbReference type="PROSITE-ProRule" id="PRU00521"/>
    </source>
</evidence>
<evidence type="ECO:0000256" key="4">
    <source>
        <dbReference type="SAM" id="MobiDB-lite"/>
    </source>
</evidence>
<evidence type="ECO:0000269" key="5">
    <source>
    </source>
</evidence>
<evidence type="ECO:0000269" key="6">
    <source>
    </source>
</evidence>
<evidence type="ECO:0000305" key="7"/>
<accession>Q8C010</accession>
<accession>Q3UZR6</accession>
<feature type="chain" id="PRO_0000069579" description="G-protein coupled receptor 61">
    <location>
        <begin position="1"/>
        <end position="449"/>
    </location>
</feature>
<feature type="topological domain" description="Extracellular" evidence="2">
    <location>
        <begin position="1"/>
        <end position="44"/>
    </location>
</feature>
<feature type="transmembrane region" description="Helical; Name=1" evidence="2">
    <location>
        <begin position="45"/>
        <end position="67"/>
    </location>
</feature>
<feature type="topological domain" description="Cytoplasmic" evidence="2">
    <location>
        <begin position="68"/>
        <end position="75"/>
    </location>
</feature>
<feature type="transmembrane region" description="Helical; Name=2" evidence="2">
    <location>
        <begin position="76"/>
        <end position="98"/>
    </location>
</feature>
<feature type="topological domain" description="Extracellular" evidence="2">
    <location>
        <begin position="99"/>
        <end position="112"/>
    </location>
</feature>
<feature type="transmembrane region" description="Helical; Name=3" evidence="2">
    <location>
        <begin position="113"/>
        <end position="135"/>
    </location>
</feature>
<feature type="topological domain" description="Cytoplasmic" evidence="2">
    <location>
        <begin position="136"/>
        <end position="155"/>
    </location>
</feature>
<feature type="transmembrane region" description="Helical; Name=4" evidence="2">
    <location>
        <begin position="156"/>
        <end position="178"/>
    </location>
</feature>
<feature type="topological domain" description="Extracellular" evidence="2">
    <location>
        <begin position="179"/>
        <end position="206"/>
    </location>
</feature>
<feature type="transmembrane region" description="Helical; Name=5" evidence="2">
    <location>
        <begin position="207"/>
        <end position="229"/>
    </location>
</feature>
<feature type="topological domain" description="Cytoplasmic" evidence="2">
    <location>
        <begin position="230"/>
        <end position="287"/>
    </location>
</feature>
<feature type="transmembrane region" description="Helical; Name=6" evidence="2">
    <location>
        <begin position="288"/>
        <end position="310"/>
    </location>
</feature>
<feature type="topological domain" description="Extracellular" evidence="2">
    <location>
        <begin position="311"/>
        <end position="324"/>
    </location>
</feature>
<feature type="transmembrane region" description="Helical; Name=7" evidence="2">
    <location>
        <begin position="325"/>
        <end position="344"/>
    </location>
</feature>
<feature type="topological domain" description="Cytoplasmic" evidence="2">
    <location>
        <begin position="345"/>
        <end position="449"/>
    </location>
</feature>
<feature type="region of interest" description="Disordered" evidence="4">
    <location>
        <begin position="1"/>
        <end position="29"/>
    </location>
</feature>
<feature type="compositionally biased region" description="Low complexity" evidence="4">
    <location>
        <begin position="1"/>
        <end position="14"/>
    </location>
</feature>
<feature type="glycosylation site" description="N-linked (GlcNAc...) asparagine" evidence="2">
    <location>
        <position position="12"/>
    </location>
</feature>
<feature type="sequence conflict" description="In Ref. 1; BAC27958." evidence="7" ref="1">
    <original>L</original>
    <variation>V</variation>
    <location>
        <position position="218"/>
    </location>
</feature>
<protein>
    <recommendedName>
        <fullName>G-protein coupled receptor 61</fullName>
    </recommendedName>
</protein>
<gene>
    <name type="primary">Gpr61</name>
</gene>
<sequence>MESSPIPQSSGNSSTLGRALQTPGPSTASGVPELGLRDVASESVALFFMLLLDLTAVAGNAAVMAVIAKTPALRKFVFVFHLCLVDLLAALTLMPLAMLSSSALFDHALFGEVACRLYLFLSVCFVSLAILSVSAINVERYYYVVHPMRYEVRMTLGLVASVLVGVWVKALAMASVPVLGRVYWEEGAPSVNPGCSLQWSHSAYCQLFVVVFAVLYFLLPLILIFVVYCSMFRVARVAAMQHGPLPTWMETPRQRSESLSSRSTMVTSSGAHQTTPHRTFGGGKAAVVLLAVGGQFLLCWLPYFSFHLYVALSAQPISAGQVENVVTWIGYFCFTSNPFFYGCLNRQIRGELSKQFVCFFKAAPEEELRLPSREGSIEENFLQFLQGTSENWVSRPLPSPKREPPPVVDFRIPGQIAEETSEFLEQQLTSDIIMSDSYLRPAPSPRLES</sequence>
<proteinExistence type="evidence at transcript level"/>
<reference key="1">
    <citation type="journal article" date="2005" name="Science">
        <title>The transcriptional landscape of the mammalian genome.</title>
        <authorList>
            <person name="Carninci P."/>
            <person name="Kasukawa T."/>
            <person name="Katayama S."/>
            <person name="Gough J."/>
            <person name="Frith M.C."/>
            <person name="Maeda N."/>
            <person name="Oyama R."/>
            <person name="Ravasi T."/>
            <person name="Lenhard B."/>
            <person name="Wells C."/>
            <person name="Kodzius R."/>
            <person name="Shimokawa K."/>
            <person name="Bajic V.B."/>
            <person name="Brenner S.E."/>
            <person name="Batalov S."/>
            <person name="Forrest A.R."/>
            <person name="Zavolan M."/>
            <person name="Davis M.J."/>
            <person name="Wilming L.G."/>
            <person name="Aidinis V."/>
            <person name="Allen J.E."/>
            <person name="Ambesi-Impiombato A."/>
            <person name="Apweiler R."/>
            <person name="Aturaliya R.N."/>
            <person name="Bailey T.L."/>
            <person name="Bansal M."/>
            <person name="Baxter L."/>
            <person name="Beisel K.W."/>
            <person name="Bersano T."/>
            <person name="Bono H."/>
            <person name="Chalk A.M."/>
            <person name="Chiu K.P."/>
            <person name="Choudhary V."/>
            <person name="Christoffels A."/>
            <person name="Clutterbuck D.R."/>
            <person name="Crowe M.L."/>
            <person name="Dalla E."/>
            <person name="Dalrymple B.P."/>
            <person name="de Bono B."/>
            <person name="Della Gatta G."/>
            <person name="di Bernardo D."/>
            <person name="Down T."/>
            <person name="Engstrom P."/>
            <person name="Fagiolini M."/>
            <person name="Faulkner G."/>
            <person name="Fletcher C.F."/>
            <person name="Fukushima T."/>
            <person name="Furuno M."/>
            <person name="Futaki S."/>
            <person name="Gariboldi M."/>
            <person name="Georgii-Hemming P."/>
            <person name="Gingeras T.R."/>
            <person name="Gojobori T."/>
            <person name="Green R.E."/>
            <person name="Gustincich S."/>
            <person name="Harbers M."/>
            <person name="Hayashi Y."/>
            <person name="Hensch T.K."/>
            <person name="Hirokawa N."/>
            <person name="Hill D."/>
            <person name="Huminiecki L."/>
            <person name="Iacono M."/>
            <person name="Ikeo K."/>
            <person name="Iwama A."/>
            <person name="Ishikawa T."/>
            <person name="Jakt M."/>
            <person name="Kanapin A."/>
            <person name="Katoh M."/>
            <person name="Kawasawa Y."/>
            <person name="Kelso J."/>
            <person name="Kitamura H."/>
            <person name="Kitano H."/>
            <person name="Kollias G."/>
            <person name="Krishnan S.P."/>
            <person name="Kruger A."/>
            <person name="Kummerfeld S.K."/>
            <person name="Kurochkin I.V."/>
            <person name="Lareau L.F."/>
            <person name="Lazarevic D."/>
            <person name="Lipovich L."/>
            <person name="Liu J."/>
            <person name="Liuni S."/>
            <person name="McWilliam S."/>
            <person name="Madan Babu M."/>
            <person name="Madera M."/>
            <person name="Marchionni L."/>
            <person name="Matsuda H."/>
            <person name="Matsuzawa S."/>
            <person name="Miki H."/>
            <person name="Mignone F."/>
            <person name="Miyake S."/>
            <person name="Morris K."/>
            <person name="Mottagui-Tabar S."/>
            <person name="Mulder N."/>
            <person name="Nakano N."/>
            <person name="Nakauchi H."/>
            <person name="Ng P."/>
            <person name="Nilsson R."/>
            <person name="Nishiguchi S."/>
            <person name="Nishikawa S."/>
            <person name="Nori F."/>
            <person name="Ohara O."/>
            <person name="Okazaki Y."/>
            <person name="Orlando V."/>
            <person name="Pang K.C."/>
            <person name="Pavan W.J."/>
            <person name="Pavesi G."/>
            <person name="Pesole G."/>
            <person name="Petrovsky N."/>
            <person name="Piazza S."/>
            <person name="Reed J."/>
            <person name="Reid J.F."/>
            <person name="Ring B.Z."/>
            <person name="Ringwald M."/>
            <person name="Rost B."/>
            <person name="Ruan Y."/>
            <person name="Salzberg S.L."/>
            <person name="Sandelin A."/>
            <person name="Schneider C."/>
            <person name="Schoenbach C."/>
            <person name="Sekiguchi K."/>
            <person name="Semple C.A."/>
            <person name="Seno S."/>
            <person name="Sessa L."/>
            <person name="Sheng Y."/>
            <person name="Shibata Y."/>
            <person name="Shimada H."/>
            <person name="Shimada K."/>
            <person name="Silva D."/>
            <person name="Sinclair B."/>
            <person name="Sperling S."/>
            <person name="Stupka E."/>
            <person name="Sugiura K."/>
            <person name="Sultana R."/>
            <person name="Takenaka Y."/>
            <person name="Taki K."/>
            <person name="Tammoja K."/>
            <person name="Tan S.L."/>
            <person name="Tang S."/>
            <person name="Taylor M.S."/>
            <person name="Tegner J."/>
            <person name="Teichmann S.A."/>
            <person name="Ueda H.R."/>
            <person name="van Nimwegen E."/>
            <person name="Verardo R."/>
            <person name="Wei C.L."/>
            <person name="Yagi K."/>
            <person name="Yamanishi H."/>
            <person name="Zabarovsky E."/>
            <person name="Zhu S."/>
            <person name="Zimmer A."/>
            <person name="Hide W."/>
            <person name="Bult C."/>
            <person name="Grimmond S.M."/>
            <person name="Teasdale R.D."/>
            <person name="Liu E.T."/>
            <person name="Brusic V."/>
            <person name="Quackenbush J."/>
            <person name="Wahlestedt C."/>
            <person name="Mattick J.S."/>
            <person name="Hume D.A."/>
            <person name="Kai C."/>
            <person name="Sasaki D."/>
            <person name="Tomaru Y."/>
            <person name="Fukuda S."/>
            <person name="Kanamori-Katayama M."/>
            <person name="Suzuki M."/>
            <person name="Aoki J."/>
            <person name="Arakawa T."/>
            <person name="Iida J."/>
            <person name="Imamura K."/>
            <person name="Itoh M."/>
            <person name="Kato T."/>
            <person name="Kawaji H."/>
            <person name="Kawagashira N."/>
            <person name="Kawashima T."/>
            <person name="Kojima M."/>
            <person name="Kondo S."/>
            <person name="Konno H."/>
            <person name="Nakano K."/>
            <person name="Ninomiya N."/>
            <person name="Nishio T."/>
            <person name="Okada M."/>
            <person name="Plessy C."/>
            <person name="Shibata K."/>
            <person name="Shiraki T."/>
            <person name="Suzuki S."/>
            <person name="Tagami M."/>
            <person name="Waki K."/>
            <person name="Watahiki A."/>
            <person name="Okamura-Oho Y."/>
            <person name="Suzuki H."/>
            <person name="Kawai J."/>
            <person name="Hayashizaki Y."/>
        </authorList>
    </citation>
    <scope>NUCLEOTIDE SEQUENCE [LARGE SCALE MRNA]</scope>
    <source>
        <strain>C57BL/6J</strain>
        <tissue>Head</tissue>
        <tissue>Olfactory bulb</tissue>
    </source>
</reference>
<reference key="2">
    <citation type="journal article" date="2009" name="PLoS Biol.">
        <title>Lineage-specific biology revealed by a finished genome assembly of the mouse.</title>
        <authorList>
            <person name="Church D.M."/>
            <person name="Goodstadt L."/>
            <person name="Hillier L.W."/>
            <person name="Zody M.C."/>
            <person name="Goldstein S."/>
            <person name="She X."/>
            <person name="Bult C.J."/>
            <person name="Agarwala R."/>
            <person name="Cherry J.L."/>
            <person name="DiCuccio M."/>
            <person name="Hlavina W."/>
            <person name="Kapustin Y."/>
            <person name="Meric P."/>
            <person name="Maglott D."/>
            <person name="Birtle Z."/>
            <person name="Marques A.C."/>
            <person name="Graves T."/>
            <person name="Zhou S."/>
            <person name="Teague B."/>
            <person name="Potamousis K."/>
            <person name="Churas C."/>
            <person name="Place M."/>
            <person name="Herschleb J."/>
            <person name="Runnheim R."/>
            <person name="Forrest D."/>
            <person name="Amos-Landgraf J."/>
            <person name="Schwartz D.C."/>
            <person name="Cheng Z."/>
            <person name="Lindblad-Toh K."/>
            <person name="Eichler E.E."/>
            <person name="Ponting C.P."/>
        </authorList>
    </citation>
    <scope>NUCLEOTIDE SEQUENCE [LARGE SCALE GENOMIC DNA]</scope>
    <source>
        <strain>C57BL/6J</strain>
    </source>
</reference>
<reference key="3">
    <citation type="submission" date="2005-07" db="EMBL/GenBank/DDBJ databases">
        <authorList>
            <person name="Mural R.J."/>
            <person name="Adams M.D."/>
            <person name="Myers E.W."/>
            <person name="Smith H.O."/>
            <person name="Venter J.C."/>
        </authorList>
    </citation>
    <scope>NUCLEOTIDE SEQUENCE [LARGE SCALE GENOMIC DNA]</scope>
</reference>
<reference key="4">
    <citation type="journal article" date="2004" name="Genome Res.">
        <title>The status, quality, and expansion of the NIH full-length cDNA project: the Mammalian Gene Collection (MGC).</title>
        <authorList>
            <consortium name="The MGC Project Team"/>
        </authorList>
    </citation>
    <scope>NUCLEOTIDE SEQUENCE [LARGE SCALE MRNA]</scope>
</reference>
<reference key="5">
    <citation type="journal article" date="2011" name="Life Sci.">
        <title>Characterization of metabolic phenotypes of mice lacking GPR61, an orphan G-protein coupled receptor.</title>
        <authorList>
            <person name="Nambu H."/>
            <person name="Fukushima M."/>
            <person name="Hikichi H."/>
            <person name="Inoue T."/>
            <person name="Nagano N."/>
            <person name="Tahara Y."/>
            <person name="Nambu T."/>
            <person name="Ito J."/>
            <person name="Ogawa Y."/>
            <person name="Ozaki S."/>
            <person name="Ohta H."/>
        </authorList>
    </citation>
    <scope>DISRUPTION PHENOTYPE</scope>
    <scope>TISSUE SPECIFICITY</scope>
    <scope>FUNCTION</scope>
</reference>
<reference key="6">
    <citation type="journal article" date="2017" name="Reproduction">
        <title>GPR62 constitutively activates cAMP signaling but is dispensable for male fertility in mice.</title>
        <authorList>
            <person name="Muroi T."/>
            <person name="Matsushima Y."/>
            <person name="Kanamori R."/>
            <person name="Inoue H."/>
            <person name="Fujii W."/>
            <person name="Yogo K."/>
        </authorList>
    </citation>
    <scope>TISSUE SPECIFICITY</scope>
</reference>
<dbReference type="EMBL" id="AK032627">
    <property type="protein sequence ID" value="BAC27958.1"/>
    <property type="molecule type" value="mRNA"/>
</dbReference>
<dbReference type="EMBL" id="AK133702">
    <property type="protein sequence ID" value="BAE21789.1"/>
    <property type="molecule type" value="mRNA"/>
</dbReference>
<dbReference type="EMBL" id="AL671854">
    <property type="status" value="NOT_ANNOTATED_CDS"/>
    <property type="molecule type" value="Genomic_DNA"/>
</dbReference>
<dbReference type="EMBL" id="CH466607">
    <property type="protein sequence ID" value="EDL01951.1"/>
    <property type="molecule type" value="Genomic_DNA"/>
</dbReference>
<dbReference type="EMBL" id="BC116333">
    <property type="protein sequence ID" value="AAI16334.1"/>
    <property type="molecule type" value="mRNA"/>
</dbReference>
<dbReference type="EMBL" id="BC116334">
    <property type="protein sequence ID" value="AAI16335.1"/>
    <property type="molecule type" value="mRNA"/>
</dbReference>
<dbReference type="CCDS" id="CCDS17752.1"/>
<dbReference type="RefSeq" id="NP_001292390.1">
    <property type="nucleotide sequence ID" value="NM_001305461.2"/>
</dbReference>
<dbReference type="RefSeq" id="NP_001398227.1">
    <property type="nucleotide sequence ID" value="NM_001411298.1"/>
</dbReference>
<dbReference type="RefSeq" id="XP_017175048.1">
    <property type="nucleotide sequence ID" value="XM_017319559.1"/>
</dbReference>
<dbReference type="SMR" id="Q8C010"/>
<dbReference type="FunCoup" id="Q8C010">
    <property type="interactions" value="219"/>
</dbReference>
<dbReference type="STRING" id="10090.ENSMUSP00000055557"/>
<dbReference type="GlyCosmos" id="Q8C010">
    <property type="glycosylation" value="1 site, No reported glycans"/>
</dbReference>
<dbReference type="GlyGen" id="Q8C010">
    <property type="glycosylation" value="1 site"/>
</dbReference>
<dbReference type="PhosphoSitePlus" id="Q8C010"/>
<dbReference type="PaxDb" id="10090-ENSMUSP00000055557"/>
<dbReference type="ProteomicsDB" id="271456"/>
<dbReference type="Antibodypedia" id="1935">
    <property type="antibodies" value="167 antibodies from 24 providers"/>
</dbReference>
<dbReference type="DNASU" id="229714"/>
<dbReference type="Ensembl" id="ENSMUST00000062028.8">
    <property type="protein sequence ID" value="ENSMUSP00000055557.2"/>
    <property type="gene ID" value="ENSMUSG00000046793.9"/>
</dbReference>
<dbReference type="Ensembl" id="ENSMUST00000116284.2">
    <property type="protein sequence ID" value="ENSMUSP00000111988.2"/>
    <property type="gene ID" value="ENSMUSG00000046793.9"/>
</dbReference>
<dbReference type="GeneID" id="229714"/>
<dbReference type="KEGG" id="mmu:229714"/>
<dbReference type="UCSC" id="uc008qye.2">
    <property type="organism name" value="mouse"/>
</dbReference>
<dbReference type="AGR" id="MGI:2441719"/>
<dbReference type="CTD" id="83873"/>
<dbReference type="MGI" id="MGI:2441719">
    <property type="gene designation" value="Gpr61"/>
</dbReference>
<dbReference type="VEuPathDB" id="HostDB:ENSMUSG00000046793"/>
<dbReference type="eggNOG" id="KOG3656">
    <property type="taxonomic scope" value="Eukaryota"/>
</dbReference>
<dbReference type="GeneTree" id="ENSGT00950000182998"/>
<dbReference type="HOGENOM" id="CLU_009579_3_1_1"/>
<dbReference type="InParanoid" id="Q8C010"/>
<dbReference type="OMA" id="WMETPRR"/>
<dbReference type="OrthoDB" id="6117944at2759"/>
<dbReference type="PhylomeDB" id="Q8C010"/>
<dbReference type="TreeFam" id="TF332667"/>
<dbReference type="BioGRID-ORCS" id="229714">
    <property type="hits" value="4 hits in 60 CRISPR screens"/>
</dbReference>
<dbReference type="PRO" id="PR:Q8C010"/>
<dbReference type="Proteomes" id="UP000000589">
    <property type="component" value="Chromosome 3"/>
</dbReference>
<dbReference type="RNAct" id="Q8C010">
    <property type="molecule type" value="protein"/>
</dbReference>
<dbReference type="Bgee" id="ENSMUSG00000046793">
    <property type="expression patterns" value="Expressed in medial dorsal nucleus of thalamus and 81 other cell types or tissues"/>
</dbReference>
<dbReference type="GO" id="GO:0005768">
    <property type="term" value="C:endosome"/>
    <property type="evidence" value="ECO:0000250"/>
    <property type="project" value="UniProtKB"/>
</dbReference>
<dbReference type="GO" id="GO:0010008">
    <property type="term" value="C:endosome membrane"/>
    <property type="evidence" value="ECO:0007669"/>
    <property type="project" value="UniProtKB-SubCell"/>
</dbReference>
<dbReference type="GO" id="GO:0005886">
    <property type="term" value="C:plasma membrane"/>
    <property type="evidence" value="ECO:0007669"/>
    <property type="project" value="UniProtKB-SubCell"/>
</dbReference>
<dbReference type="GO" id="GO:0043235">
    <property type="term" value="C:receptor complex"/>
    <property type="evidence" value="ECO:0000266"/>
    <property type="project" value="MGI"/>
</dbReference>
<dbReference type="GO" id="GO:1990763">
    <property type="term" value="F:arrestin family protein binding"/>
    <property type="evidence" value="ECO:0000250"/>
    <property type="project" value="UniProtKB"/>
</dbReference>
<dbReference type="GO" id="GO:0004930">
    <property type="term" value="F:G protein-coupled receptor activity"/>
    <property type="evidence" value="ECO:0007669"/>
    <property type="project" value="UniProtKB-KW"/>
</dbReference>
<dbReference type="GO" id="GO:0038035">
    <property type="term" value="P:ligand-independent adenylate cyclase-activating G protein-coupled receptor signaling pathway"/>
    <property type="evidence" value="ECO:0000250"/>
    <property type="project" value="UniProtKB"/>
</dbReference>
<dbReference type="CDD" id="cd15220">
    <property type="entry name" value="7tmA_GPR61_GPR62-like"/>
    <property type="match status" value="1"/>
</dbReference>
<dbReference type="FunFam" id="1.20.1070.10:FF:000195">
    <property type="entry name" value="probable G-protein coupled receptor 61"/>
    <property type="match status" value="1"/>
</dbReference>
<dbReference type="Gene3D" id="1.20.1070.10">
    <property type="entry name" value="Rhodopsin 7-helix transmembrane proteins"/>
    <property type="match status" value="1"/>
</dbReference>
<dbReference type="InterPro" id="IPR000276">
    <property type="entry name" value="GPCR_Rhodpsn"/>
</dbReference>
<dbReference type="InterPro" id="IPR017452">
    <property type="entry name" value="GPCR_Rhodpsn_7TM"/>
</dbReference>
<dbReference type="PANTHER" id="PTHR22752">
    <property type="entry name" value="G PROTEIN-COUPLED RECEPTOR"/>
    <property type="match status" value="1"/>
</dbReference>
<dbReference type="PANTHER" id="PTHR22752:SF5">
    <property type="entry name" value="G-PROTEIN COUPLED RECEPTOR 61"/>
    <property type="match status" value="1"/>
</dbReference>
<dbReference type="Pfam" id="PF00001">
    <property type="entry name" value="7tm_1"/>
    <property type="match status" value="1"/>
</dbReference>
<dbReference type="PRINTS" id="PR00237">
    <property type="entry name" value="GPCRRHODOPSN"/>
</dbReference>
<dbReference type="SUPFAM" id="SSF81321">
    <property type="entry name" value="Family A G protein-coupled receptor-like"/>
    <property type="match status" value="1"/>
</dbReference>
<dbReference type="PROSITE" id="PS00237">
    <property type="entry name" value="G_PROTEIN_RECEP_F1_1"/>
    <property type="match status" value="1"/>
</dbReference>
<dbReference type="PROSITE" id="PS50262">
    <property type="entry name" value="G_PROTEIN_RECEP_F1_2"/>
    <property type="match status" value="1"/>
</dbReference>